<feature type="chain" id="PRO_0000251555" description="Large ribosomal subunit protein uL15">
    <location>
        <begin position="1"/>
        <end position="152"/>
    </location>
</feature>
<feature type="region of interest" description="Disordered" evidence="2">
    <location>
        <begin position="18"/>
        <end position="37"/>
    </location>
</feature>
<feature type="compositionally biased region" description="Gly residues" evidence="2">
    <location>
        <begin position="23"/>
        <end position="35"/>
    </location>
</feature>
<name>RL15_RICBR</name>
<comment type="function">
    <text evidence="1">Binds to the 23S rRNA.</text>
</comment>
<comment type="subunit">
    <text evidence="1">Part of the 50S ribosomal subunit.</text>
</comment>
<comment type="similarity">
    <text evidence="1">Belongs to the universal ribosomal protein uL15 family.</text>
</comment>
<evidence type="ECO:0000255" key="1">
    <source>
        <dbReference type="HAMAP-Rule" id="MF_01341"/>
    </source>
</evidence>
<evidence type="ECO:0000256" key="2">
    <source>
        <dbReference type="SAM" id="MobiDB-lite"/>
    </source>
</evidence>
<evidence type="ECO:0000305" key="3"/>
<protein>
    <recommendedName>
        <fullName evidence="1">Large ribosomal subunit protein uL15</fullName>
    </recommendedName>
    <alternativeName>
        <fullName evidence="3">50S ribosomal protein L15</fullName>
    </alternativeName>
</protein>
<sequence length="152" mass="16661">MKLNELYNNIGAKKNKKRVARGIGSGKGKTAGRGVKGQKSRAGVAIKGFEGGQTPMIKRLPKRGFNCISSKKYNVINIYNIEAAIAEERLNANDVITKEKLIEIGLINKSNKKLVKLLSICSDDFNYPLSFKLDSYSSKAKEIVEKAGGKLL</sequence>
<proteinExistence type="inferred from homology"/>
<gene>
    <name evidence="1" type="primary">rplO</name>
    <name type="ordered locus">RBE_1043</name>
</gene>
<organism>
    <name type="scientific">Rickettsia bellii (strain RML369-C)</name>
    <dbReference type="NCBI Taxonomy" id="336407"/>
    <lineage>
        <taxon>Bacteria</taxon>
        <taxon>Pseudomonadati</taxon>
        <taxon>Pseudomonadota</taxon>
        <taxon>Alphaproteobacteria</taxon>
        <taxon>Rickettsiales</taxon>
        <taxon>Rickettsiaceae</taxon>
        <taxon>Rickettsieae</taxon>
        <taxon>Rickettsia</taxon>
        <taxon>belli group</taxon>
    </lineage>
</organism>
<keyword id="KW-0687">Ribonucleoprotein</keyword>
<keyword id="KW-0689">Ribosomal protein</keyword>
<keyword id="KW-0694">RNA-binding</keyword>
<keyword id="KW-0699">rRNA-binding</keyword>
<accession>Q1RHP0</accession>
<dbReference type="EMBL" id="CP000087">
    <property type="protein sequence ID" value="ABE05124.1"/>
    <property type="molecule type" value="Genomic_DNA"/>
</dbReference>
<dbReference type="RefSeq" id="WP_011477702.1">
    <property type="nucleotide sequence ID" value="NC_007940.1"/>
</dbReference>
<dbReference type="SMR" id="Q1RHP0"/>
<dbReference type="KEGG" id="rbe:RBE_1043"/>
<dbReference type="eggNOG" id="COG0200">
    <property type="taxonomic scope" value="Bacteria"/>
</dbReference>
<dbReference type="HOGENOM" id="CLU_055188_4_0_5"/>
<dbReference type="OrthoDB" id="9810293at2"/>
<dbReference type="Proteomes" id="UP000001951">
    <property type="component" value="Chromosome"/>
</dbReference>
<dbReference type="GO" id="GO:0015934">
    <property type="term" value="C:large ribosomal subunit"/>
    <property type="evidence" value="ECO:0007669"/>
    <property type="project" value="InterPro"/>
</dbReference>
<dbReference type="GO" id="GO:0019843">
    <property type="term" value="F:rRNA binding"/>
    <property type="evidence" value="ECO:0007669"/>
    <property type="project" value="UniProtKB-UniRule"/>
</dbReference>
<dbReference type="GO" id="GO:0003735">
    <property type="term" value="F:structural constituent of ribosome"/>
    <property type="evidence" value="ECO:0007669"/>
    <property type="project" value="InterPro"/>
</dbReference>
<dbReference type="GO" id="GO:0006412">
    <property type="term" value="P:translation"/>
    <property type="evidence" value="ECO:0007669"/>
    <property type="project" value="UniProtKB-UniRule"/>
</dbReference>
<dbReference type="Gene3D" id="3.100.10.10">
    <property type="match status" value="1"/>
</dbReference>
<dbReference type="HAMAP" id="MF_01341">
    <property type="entry name" value="Ribosomal_uL15"/>
    <property type="match status" value="1"/>
</dbReference>
<dbReference type="InterPro" id="IPR030878">
    <property type="entry name" value="Ribosomal_uL15"/>
</dbReference>
<dbReference type="InterPro" id="IPR021131">
    <property type="entry name" value="Ribosomal_uL15/eL18"/>
</dbReference>
<dbReference type="InterPro" id="IPR036227">
    <property type="entry name" value="Ribosomal_uL15/eL18_sf"/>
</dbReference>
<dbReference type="InterPro" id="IPR005749">
    <property type="entry name" value="Ribosomal_uL15_bac-type"/>
</dbReference>
<dbReference type="NCBIfam" id="TIGR01071">
    <property type="entry name" value="rplO_bact"/>
    <property type="match status" value="1"/>
</dbReference>
<dbReference type="PANTHER" id="PTHR12934">
    <property type="entry name" value="50S RIBOSOMAL PROTEIN L15"/>
    <property type="match status" value="1"/>
</dbReference>
<dbReference type="PANTHER" id="PTHR12934:SF11">
    <property type="entry name" value="LARGE RIBOSOMAL SUBUNIT PROTEIN UL15M"/>
    <property type="match status" value="1"/>
</dbReference>
<dbReference type="Pfam" id="PF00828">
    <property type="entry name" value="Ribosomal_L27A"/>
    <property type="match status" value="1"/>
</dbReference>
<dbReference type="SUPFAM" id="SSF52080">
    <property type="entry name" value="Ribosomal proteins L15p and L18e"/>
    <property type="match status" value="1"/>
</dbReference>
<reference key="1">
    <citation type="journal article" date="2006" name="PLoS Genet.">
        <title>Genome sequence of Rickettsia bellii illuminates the role of amoebae in gene exchanges between intracellular pathogens.</title>
        <authorList>
            <person name="Ogata H."/>
            <person name="La Scola B."/>
            <person name="Audic S."/>
            <person name="Renesto P."/>
            <person name="Blanc G."/>
            <person name="Robert C."/>
            <person name="Fournier P.-E."/>
            <person name="Claverie J.-M."/>
            <person name="Raoult D."/>
        </authorList>
    </citation>
    <scope>NUCLEOTIDE SEQUENCE [LARGE SCALE GENOMIC DNA]</scope>
    <source>
        <strain>RML369-C</strain>
    </source>
</reference>